<comment type="function">
    <text>Endothelins are endothelium-derived vasoconstrictor peptides.</text>
</comment>
<comment type="subcellular location">
    <subcellularLocation>
        <location>Secreted</location>
    </subcellularLocation>
</comment>
<comment type="similarity">
    <text evidence="4">Belongs to the endothelin/sarafotoxin family.</text>
</comment>
<dbReference type="EMBL" id="AB079607">
    <property type="protein sequence ID" value="BAC06584.1"/>
    <property type="molecule type" value="mRNA"/>
</dbReference>
<dbReference type="RefSeq" id="NP_001297108.1">
    <property type="nucleotide sequence ID" value="NM_001310179.1"/>
</dbReference>
<dbReference type="FunCoup" id="Q8MJW9">
    <property type="interactions" value="1"/>
</dbReference>
<dbReference type="STRING" id="9669.ENSMPUP00000013968"/>
<dbReference type="GeneID" id="101689173"/>
<dbReference type="CTD" id="1907"/>
<dbReference type="eggNOG" id="ENOG502S5KM">
    <property type="taxonomic scope" value="Eukaryota"/>
</dbReference>
<dbReference type="HOGENOM" id="CLU_090013_2_1_1"/>
<dbReference type="InParanoid" id="Q8MJW9"/>
<dbReference type="OMA" id="PTAWCSV"/>
<dbReference type="OrthoDB" id="9362154at2759"/>
<dbReference type="Proteomes" id="UP000000715">
    <property type="component" value="Unplaced"/>
</dbReference>
<dbReference type="GO" id="GO:0005615">
    <property type="term" value="C:extracellular space"/>
    <property type="evidence" value="ECO:0007669"/>
    <property type="project" value="Ensembl"/>
</dbReference>
<dbReference type="GO" id="GO:0031708">
    <property type="term" value="F:endothelin B receptor binding"/>
    <property type="evidence" value="ECO:0007669"/>
    <property type="project" value="Ensembl"/>
</dbReference>
<dbReference type="GO" id="GO:0005179">
    <property type="term" value="F:hormone activity"/>
    <property type="evidence" value="ECO:0007669"/>
    <property type="project" value="Ensembl"/>
</dbReference>
<dbReference type="GO" id="GO:0001525">
    <property type="term" value="P:angiogenesis"/>
    <property type="evidence" value="ECO:0007669"/>
    <property type="project" value="Ensembl"/>
</dbReference>
<dbReference type="GO" id="GO:0014824">
    <property type="term" value="P:artery smooth muscle contraction"/>
    <property type="evidence" value="ECO:0007669"/>
    <property type="project" value="Ensembl"/>
</dbReference>
<dbReference type="GO" id="GO:0048675">
    <property type="term" value="P:axon extension"/>
    <property type="evidence" value="ECO:0007669"/>
    <property type="project" value="Ensembl"/>
</dbReference>
<dbReference type="GO" id="GO:0009932">
    <property type="term" value="P:cell tip growth"/>
    <property type="evidence" value="ECO:0007669"/>
    <property type="project" value="Ensembl"/>
</dbReference>
<dbReference type="GO" id="GO:0019221">
    <property type="term" value="P:cytokine-mediated signaling pathway"/>
    <property type="evidence" value="ECO:0007669"/>
    <property type="project" value="Ensembl"/>
</dbReference>
<dbReference type="GO" id="GO:0043542">
    <property type="term" value="P:endothelial cell migration"/>
    <property type="evidence" value="ECO:0007669"/>
    <property type="project" value="Ensembl"/>
</dbReference>
<dbReference type="GO" id="GO:0097009">
    <property type="term" value="P:energy homeostasis"/>
    <property type="evidence" value="ECO:0007669"/>
    <property type="project" value="Ensembl"/>
</dbReference>
<dbReference type="GO" id="GO:0006874">
    <property type="term" value="P:intracellular calcium ion homeostasis"/>
    <property type="evidence" value="ECO:0007669"/>
    <property type="project" value="TreeGrafter"/>
</dbReference>
<dbReference type="GO" id="GO:0048286">
    <property type="term" value="P:lung alveolus development"/>
    <property type="evidence" value="ECO:0007669"/>
    <property type="project" value="Ensembl"/>
</dbReference>
<dbReference type="GO" id="GO:0042116">
    <property type="term" value="P:macrophage activation"/>
    <property type="evidence" value="ECO:0007669"/>
    <property type="project" value="Ensembl"/>
</dbReference>
<dbReference type="GO" id="GO:0048246">
    <property type="term" value="P:macrophage chemotaxis"/>
    <property type="evidence" value="ECO:0007669"/>
    <property type="project" value="Ensembl"/>
</dbReference>
<dbReference type="GO" id="GO:0030593">
    <property type="term" value="P:neutrophil chemotaxis"/>
    <property type="evidence" value="ECO:0007669"/>
    <property type="project" value="Ensembl"/>
</dbReference>
<dbReference type="GO" id="GO:0050850">
    <property type="term" value="P:positive regulation of calcium-mediated signaling"/>
    <property type="evidence" value="ECO:0007669"/>
    <property type="project" value="Ensembl"/>
</dbReference>
<dbReference type="GO" id="GO:0008284">
    <property type="term" value="P:positive regulation of cell population proliferation"/>
    <property type="evidence" value="ECO:0007669"/>
    <property type="project" value="Ensembl"/>
</dbReference>
<dbReference type="GO" id="GO:0010460">
    <property type="term" value="P:positive regulation of heart rate"/>
    <property type="evidence" value="ECO:0007669"/>
    <property type="project" value="Ensembl"/>
</dbReference>
<dbReference type="GO" id="GO:0002690">
    <property type="term" value="P:positive regulation of leukocyte chemotaxis"/>
    <property type="evidence" value="ECO:0007669"/>
    <property type="project" value="Ensembl"/>
</dbReference>
<dbReference type="GO" id="GO:0045987">
    <property type="term" value="P:positive regulation of smooth muscle contraction"/>
    <property type="evidence" value="ECO:0007669"/>
    <property type="project" value="Ensembl"/>
</dbReference>
<dbReference type="GO" id="GO:0001516">
    <property type="term" value="P:prostaglandin biosynthetic process"/>
    <property type="evidence" value="ECO:0007669"/>
    <property type="project" value="Ensembl"/>
</dbReference>
<dbReference type="GO" id="GO:0003100">
    <property type="term" value="P:regulation of systemic arterial blood pressure by endothelin"/>
    <property type="evidence" value="ECO:0007669"/>
    <property type="project" value="Ensembl"/>
</dbReference>
<dbReference type="GO" id="GO:0019229">
    <property type="term" value="P:regulation of vasoconstriction"/>
    <property type="evidence" value="ECO:0007669"/>
    <property type="project" value="InterPro"/>
</dbReference>
<dbReference type="GO" id="GO:0001659">
    <property type="term" value="P:temperature homeostasis"/>
    <property type="evidence" value="ECO:0007669"/>
    <property type="project" value="Ensembl"/>
</dbReference>
<dbReference type="GO" id="GO:0014826">
    <property type="term" value="P:vein smooth muscle contraction"/>
    <property type="evidence" value="ECO:0007669"/>
    <property type="project" value="Ensembl"/>
</dbReference>
<dbReference type="InterPro" id="IPR020475">
    <property type="entry name" value="Endothelin"/>
</dbReference>
<dbReference type="InterPro" id="IPR019764">
    <property type="entry name" value="Endothelin_toxin_CS"/>
</dbReference>
<dbReference type="InterPro" id="IPR001928">
    <property type="entry name" value="Endothln-like_toxin"/>
</dbReference>
<dbReference type="PANTHER" id="PTHR13874">
    <property type="entry name" value="ENDOTHELIN"/>
    <property type="match status" value="1"/>
</dbReference>
<dbReference type="PANTHER" id="PTHR13874:SF9">
    <property type="entry name" value="ENDOTHELIN-2"/>
    <property type="match status" value="1"/>
</dbReference>
<dbReference type="Pfam" id="PF00322">
    <property type="entry name" value="Endothelin"/>
    <property type="match status" value="1"/>
</dbReference>
<dbReference type="PRINTS" id="PR00365">
    <property type="entry name" value="ENDOTHELIN"/>
</dbReference>
<dbReference type="SMART" id="SM00272">
    <property type="entry name" value="END"/>
    <property type="match status" value="2"/>
</dbReference>
<dbReference type="PROSITE" id="PS00270">
    <property type="entry name" value="ENDOTHELIN"/>
    <property type="match status" value="2"/>
</dbReference>
<protein>
    <recommendedName>
        <fullName>Endothelin-2</fullName>
        <shortName>ET-2</shortName>
    </recommendedName>
    <alternativeName>
        <fullName>Preproendothelin-2</fullName>
        <shortName>PPET2</shortName>
    </alternativeName>
</protein>
<gene>
    <name type="primary">EDN2</name>
</gene>
<accession>Q8MJW9</accession>
<keyword id="KW-0165">Cleavage on pair of basic residues</keyword>
<keyword id="KW-1015">Disulfide bond</keyword>
<keyword id="KW-1185">Reference proteome</keyword>
<keyword id="KW-0964">Secreted</keyword>
<keyword id="KW-0732">Signal</keyword>
<keyword id="KW-0838">Vasoactive</keyword>
<keyword id="KW-0839">Vasoconstrictor</keyword>
<sequence>MVAVPTAWCSVALALLLALQEGKGQVAAAPDHPAPSPRARGSHLRPRRCSCSSWLDKECVYFCHLDIIWVNTPGQTAPYGLGNPPRRRRRSLPKRCECSSSGDPACATFCHRRPWAEAVVVPGSRSPADVFQAGQRWTSAGELLQQLREISATKIRFARQHQEAEREPRPMYPRRRKT</sequence>
<feature type="signal peptide" evidence="2">
    <location>
        <begin position="1"/>
        <end position="24"/>
    </location>
</feature>
<feature type="propeptide" id="PRO_0000008096" evidence="1">
    <location>
        <begin position="25"/>
        <end position="46"/>
    </location>
</feature>
<feature type="peptide" id="PRO_0000008097" description="Endothelin-2">
    <location>
        <begin position="49"/>
        <end position="69"/>
    </location>
</feature>
<feature type="propeptide" id="PRO_0000008098" evidence="1">
    <location>
        <begin position="70"/>
        <end position="178"/>
    </location>
</feature>
<feature type="region of interest" description="Endothelin-like">
    <location>
        <begin position="96"/>
        <end position="111"/>
    </location>
</feature>
<feature type="region of interest" description="Disordered" evidence="3">
    <location>
        <begin position="158"/>
        <end position="178"/>
    </location>
</feature>
<feature type="compositionally biased region" description="Basic and acidic residues" evidence="3">
    <location>
        <begin position="160"/>
        <end position="169"/>
    </location>
</feature>
<feature type="site" description="Cleavage; by KEL" evidence="1">
    <location>
        <begin position="69"/>
        <end position="70"/>
    </location>
</feature>
<feature type="disulfide bond" evidence="1">
    <location>
        <begin position="49"/>
        <end position="63"/>
    </location>
</feature>
<feature type="disulfide bond" evidence="1">
    <location>
        <begin position="51"/>
        <end position="59"/>
    </location>
</feature>
<name>EDN2_MUSPF</name>
<organism>
    <name type="scientific">Mustela putorius furo</name>
    <name type="common">European domestic ferret</name>
    <name type="synonym">Mustela furo</name>
    <dbReference type="NCBI Taxonomy" id="9669"/>
    <lineage>
        <taxon>Eukaryota</taxon>
        <taxon>Metazoa</taxon>
        <taxon>Chordata</taxon>
        <taxon>Craniata</taxon>
        <taxon>Vertebrata</taxon>
        <taxon>Euteleostomi</taxon>
        <taxon>Mammalia</taxon>
        <taxon>Eutheria</taxon>
        <taxon>Laurasiatheria</taxon>
        <taxon>Carnivora</taxon>
        <taxon>Caniformia</taxon>
        <taxon>Musteloidea</taxon>
        <taxon>Mustelidae</taxon>
        <taxon>Mustelinae</taxon>
        <taxon>Mustela</taxon>
    </lineage>
</organism>
<proteinExistence type="evidence at transcript level"/>
<reference key="1">
    <citation type="journal article" date="2002" name="DNA Seq.">
        <title>cDNA and deduced amino acid sequences of ferret preproendothelin-2 and phylogenetic analysis.</title>
        <authorList>
            <person name="Uchide T."/>
            <person name="Fujimori Y."/>
            <person name="Sasaki T."/>
            <person name="Temma K."/>
            <person name="Lee Y.S."/>
            <person name="Saida K."/>
        </authorList>
    </citation>
    <scope>NUCLEOTIDE SEQUENCE [MRNA]</scope>
    <source>
        <tissue>Intestine</tissue>
    </source>
</reference>
<evidence type="ECO:0000250" key="1"/>
<evidence type="ECO:0000255" key="2"/>
<evidence type="ECO:0000256" key="3">
    <source>
        <dbReference type="SAM" id="MobiDB-lite"/>
    </source>
</evidence>
<evidence type="ECO:0000305" key="4"/>